<proteinExistence type="inferred from homology"/>
<organism>
    <name type="scientific">Rhizobium meliloti (strain 1021)</name>
    <name type="common">Ensifer meliloti</name>
    <name type="synonym">Sinorhizobium meliloti</name>
    <dbReference type="NCBI Taxonomy" id="266834"/>
    <lineage>
        <taxon>Bacteria</taxon>
        <taxon>Pseudomonadati</taxon>
        <taxon>Pseudomonadota</taxon>
        <taxon>Alphaproteobacteria</taxon>
        <taxon>Hyphomicrobiales</taxon>
        <taxon>Rhizobiaceae</taxon>
        <taxon>Sinorhizobium/Ensifer group</taxon>
        <taxon>Sinorhizobium</taxon>
    </lineage>
</organism>
<sequence length="331" mass="37425">MSIAAKDIEPADIPGNLQGGEYSPYHVFSAEEWSRFRADTPLTLTADEVQRLRSLNDPVDLDEVRRIYLSLSRLLSAHVEASQILFRQRTRFLSMSNETKTPFVIGVAGSVAVGKSTTARILAELLARWPSSPKVDLVTTDGFLYPNAVLQRENLMDRKGFPASYDIGALLRFLSAIKAGRPNVKAPTYSHLTYDVIPDQFQVIDRPDILIFEGINVLQSRDLPADGKIVPMVSDFFDFSIYIDAEESLIHSWYVNRFMRLRETAFQSPQSFFHRYATISEDAARAIAEGLWHNINLKNLHQNILPTRPRADLILQKGPNHLTQTVALRKL</sequence>
<keyword id="KW-0067">ATP-binding</keyword>
<keyword id="KW-0173">Coenzyme A biosynthesis</keyword>
<keyword id="KW-0963">Cytoplasm</keyword>
<keyword id="KW-0418">Kinase</keyword>
<keyword id="KW-0547">Nucleotide-binding</keyword>
<keyword id="KW-1185">Reference proteome</keyword>
<keyword id="KW-0808">Transferase</keyword>
<name>COAA_RHIME</name>
<reference key="1">
    <citation type="journal article" date="2001" name="Proc. Natl. Acad. Sci. U.S.A.">
        <title>Analysis of the chromosome sequence of the legume symbiont Sinorhizobium meliloti strain 1021.</title>
        <authorList>
            <person name="Capela D."/>
            <person name="Barloy-Hubler F."/>
            <person name="Gouzy J."/>
            <person name="Bothe G."/>
            <person name="Ampe F."/>
            <person name="Batut J."/>
            <person name="Boistard P."/>
            <person name="Becker A."/>
            <person name="Boutry M."/>
            <person name="Cadieu E."/>
            <person name="Dreano S."/>
            <person name="Gloux S."/>
            <person name="Godrie T."/>
            <person name="Goffeau A."/>
            <person name="Kahn D."/>
            <person name="Kiss E."/>
            <person name="Lelaure V."/>
            <person name="Masuy D."/>
            <person name="Pohl T."/>
            <person name="Portetelle D."/>
            <person name="Puehler A."/>
            <person name="Purnelle B."/>
            <person name="Ramsperger U."/>
            <person name="Renard C."/>
            <person name="Thebault P."/>
            <person name="Vandenbol M."/>
            <person name="Weidner S."/>
            <person name="Galibert F."/>
        </authorList>
    </citation>
    <scope>NUCLEOTIDE SEQUENCE [LARGE SCALE GENOMIC DNA]</scope>
    <source>
        <strain>1021</strain>
    </source>
</reference>
<reference key="2">
    <citation type="journal article" date="2001" name="Science">
        <title>The composite genome of the legume symbiont Sinorhizobium meliloti.</title>
        <authorList>
            <person name="Galibert F."/>
            <person name="Finan T.M."/>
            <person name="Long S.R."/>
            <person name="Puehler A."/>
            <person name="Abola P."/>
            <person name="Ampe F."/>
            <person name="Barloy-Hubler F."/>
            <person name="Barnett M.J."/>
            <person name="Becker A."/>
            <person name="Boistard P."/>
            <person name="Bothe G."/>
            <person name="Boutry M."/>
            <person name="Bowser L."/>
            <person name="Buhrmester J."/>
            <person name="Cadieu E."/>
            <person name="Capela D."/>
            <person name="Chain P."/>
            <person name="Cowie A."/>
            <person name="Davis R.W."/>
            <person name="Dreano S."/>
            <person name="Federspiel N.A."/>
            <person name="Fisher R.F."/>
            <person name="Gloux S."/>
            <person name="Godrie T."/>
            <person name="Goffeau A."/>
            <person name="Golding B."/>
            <person name="Gouzy J."/>
            <person name="Gurjal M."/>
            <person name="Hernandez-Lucas I."/>
            <person name="Hong A."/>
            <person name="Huizar L."/>
            <person name="Hyman R.W."/>
            <person name="Jones T."/>
            <person name="Kahn D."/>
            <person name="Kahn M.L."/>
            <person name="Kalman S."/>
            <person name="Keating D.H."/>
            <person name="Kiss E."/>
            <person name="Komp C."/>
            <person name="Lelaure V."/>
            <person name="Masuy D."/>
            <person name="Palm C."/>
            <person name="Peck M.C."/>
            <person name="Pohl T.M."/>
            <person name="Portetelle D."/>
            <person name="Purnelle B."/>
            <person name="Ramsperger U."/>
            <person name="Surzycki R."/>
            <person name="Thebault P."/>
            <person name="Vandenbol M."/>
            <person name="Vorhoelter F.J."/>
            <person name="Weidner S."/>
            <person name="Wells D.H."/>
            <person name="Wong K."/>
            <person name="Yeh K.-C."/>
            <person name="Batut J."/>
        </authorList>
    </citation>
    <scope>NUCLEOTIDE SEQUENCE [LARGE SCALE GENOMIC DNA]</scope>
    <source>
        <strain>1021</strain>
    </source>
</reference>
<gene>
    <name evidence="1" type="primary">coaA</name>
    <name type="ordered locus">R00049</name>
    <name type="ORF">SMc02567</name>
</gene>
<evidence type="ECO:0000255" key="1">
    <source>
        <dbReference type="HAMAP-Rule" id="MF_00215"/>
    </source>
</evidence>
<dbReference type="EC" id="2.7.1.33" evidence="1"/>
<dbReference type="EMBL" id="AL591688">
    <property type="protein sequence ID" value="CAC41436.1"/>
    <property type="molecule type" value="Genomic_DNA"/>
</dbReference>
<dbReference type="RefSeq" id="NP_384155.1">
    <property type="nucleotide sequence ID" value="NC_003047.1"/>
</dbReference>
<dbReference type="RefSeq" id="WP_010968317.1">
    <property type="nucleotide sequence ID" value="NC_003047.1"/>
</dbReference>
<dbReference type="SMR" id="Q92TB5"/>
<dbReference type="EnsemblBacteria" id="CAC41436">
    <property type="protein sequence ID" value="CAC41436"/>
    <property type="gene ID" value="SMc02567"/>
</dbReference>
<dbReference type="KEGG" id="sme:SMc02567"/>
<dbReference type="PATRIC" id="fig|266834.11.peg.1403"/>
<dbReference type="eggNOG" id="COG1072">
    <property type="taxonomic scope" value="Bacteria"/>
</dbReference>
<dbReference type="HOGENOM" id="CLU_053818_1_1_5"/>
<dbReference type="OrthoDB" id="1550976at2"/>
<dbReference type="UniPathway" id="UPA00241">
    <property type="reaction ID" value="UER00352"/>
</dbReference>
<dbReference type="Proteomes" id="UP000001976">
    <property type="component" value="Chromosome"/>
</dbReference>
<dbReference type="GO" id="GO:0005737">
    <property type="term" value="C:cytoplasm"/>
    <property type="evidence" value="ECO:0007669"/>
    <property type="project" value="UniProtKB-SubCell"/>
</dbReference>
<dbReference type="GO" id="GO:0005524">
    <property type="term" value="F:ATP binding"/>
    <property type="evidence" value="ECO:0007669"/>
    <property type="project" value="UniProtKB-UniRule"/>
</dbReference>
<dbReference type="GO" id="GO:0004594">
    <property type="term" value="F:pantothenate kinase activity"/>
    <property type="evidence" value="ECO:0007669"/>
    <property type="project" value="UniProtKB-UniRule"/>
</dbReference>
<dbReference type="GO" id="GO:0015937">
    <property type="term" value="P:coenzyme A biosynthetic process"/>
    <property type="evidence" value="ECO:0007669"/>
    <property type="project" value="UniProtKB-UniRule"/>
</dbReference>
<dbReference type="CDD" id="cd02025">
    <property type="entry name" value="PanK"/>
    <property type="match status" value="1"/>
</dbReference>
<dbReference type="Gene3D" id="3.40.50.300">
    <property type="entry name" value="P-loop containing nucleotide triphosphate hydrolases"/>
    <property type="match status" value="1"/>
</dbReference>
<dbReference type="HAMAP" id="MF_00215">
    <property type="entry name" value="Pantothen_kinase_1"/>
    <property type="match status" value="1"/>
</dbReference>
<dbReference type="InterPro" id="IPR027417">
    <property type="entry name" value="P-loop_NTPase"/>
</dbReference>
<dbReference type="InterPro" id="IPR004566">
    <property type="entry name" value="PanK"/>
</dbReference>
<dbReference type="InterPro" id="IPR006083">
    <property type="entry name" value="PRK/URK"/>
</dbReference>
<dbReference type="NCBIfam" id="TIGR00554">
    <property type="entry name" value="panK_bact"/>
    <property type="match status" value="1"/>
</dbReference>
<dbReference type="PANTHER" id="PTHR10285">
    <property type="entry name" value="URIDINE KINASE"/>
    <property type="match status" value="1"/>
</dbReference>
<dbReference type="Pfam" id="PF00485">
    <property type="entry name" value="PRK"/>
    <property type="match status" value="1"/>
</dbReference>
<dbReference type="PIRSF" id="PIRSF000545">
    <property type="entry name" value="Pantothenate_kin"/>
    <property type="match status" value="1"/>
</dbReference>
<dbReference type="SUPFAM" id="SSF52540">
    <property type="entry name" value="P-loop containing nucleoside triphosphate hydrolases"/>
    <property type="match status" value="1"/>
</dbReference>
<comment type="catalytic activity">
    <reaction evidence="1">
        <text>(R)-pantothenate + ATP = (R)-4'-phosphopantothenate + ADP + H(+)</text>
        <dbReference type="Rhea" id="RHEA:16373"/>
        <dbReference type="ChEBI" id="CHEBI:10986"/>
        <dbReference type="ChEBI" id="CHEBI:15378"/>
        <dbReference type="ChEBI" id="CHEBI:29032"/>
        <dbReference type="ChEBI" id="CHEBI:30616"/>
        <dbReference type="ChEBI" id="CHEBI:456216"/>
        <dbReference type="EC" id="2.7.1.33"/>
    </reaction>
</comment>
<comment type="pathway">
    <text evidence="1">Cofactor biosynthesis; coenzyme A biosynthesis; CoA from (R)-pantothenate: step 1/5.</text>
</comment>
<comment type="subcellular location">
    <subcellularLocation>
        <location evidence="1">Cytoplasm</location>
    </subcellularLocation>
</comment>
<comment type="similarity">
    <text evidence="1">Belongs to the prokaryotic pantothenate kinase family.</text>
</comment>
<accession>Q92TB5</accession>
<protein>
    <recommendedName>
        <fullName evidence="1">Pantothenate kinase</fullName>
        <ecNumber evidence="1">2.7.1.33</ecNumber>
    </recommendedName>
    <alternativeName>
        <fullName evidence="1">Pantothenic acid kinase</fullName>
    </alternativeName>
</protein>
<feature type="chain" id="PRO_0000194444" description="Pantothenate kinase">
    <location>
        <begin position="1"/>
        <end position="331"/>
    </location>
</feature>
<feature type="binding site" evidence="1">
    <location>
        <begin position="109"/>
        <end position="116"/>
    </location>
    <ligand>
        <name>ATP</name>
        <dbReference type="ChEBI" id="CHEBI:30616"/>
    </ligand>
</feature>